<comment type="function">
    <text evidence="2">This is an intracellular thiol proteinase inhibitor. Has an important role in desmosome-mediated cell-cell adhesion in the lower levels of the epidermis.</text>
</comment>
<comment type="interaction">
    <interactant intactId="EBI-724303">
        <id>P01040</id>
    </interactant>
    <interactant intactId="EBI-715062">
        <id>P07858</id>
        <label>CTSB</label>
    </interactant>
    <organismsDiffer>false</organismsDiffer>
    <experiments>2</experiments>
</comment>
<comment type="interaction">
    <interactant intactId="EBI-724303">
        <id>P01040</id>
    </interactant>
    <interactant intactId="EBI-10976677">
        <id>G5E9A7</id>
        <label>DMWD</label>
    </interactant>
    <organismsDiffer>false</organismsDiffer>
    <experiments>3</experiments>
</comment>
<comment type="interaction">
    <interactant intactId="EBI-724303">
        <id>P01040</id>
    </interactant>
    <interactant intactId="EBI-747754">
        <id>P28799</id>
        <label>GRN</label>
    </interactant>
    <organismsDiffer>false</organismsDiffer>
    <experiments>3</experiments>
</comment>
<comment type="interaction">
    <interactant intactId="EBI-724303">
        <id>P01040</id>
    </interactant>
    <interactant intactId="EBI-352682">
        <id>P04792</id>
        <label>HSPB1</label>
    </interactant>
    <organismsDiffer>false</organismsDiffer>
    <experiments>3</experiments>
</comment>
<comment type="interaction">
    <interactant intactId="EBI-724303">
        <id>P01040</id>
    </interactant>
    <interactant intactId="EBI-396669">
        <id>Q9Y3C5</id>
        <label>RNF11</label>
    </interactant>
    <organismsDiffer>false</organismsDiffer>
    <experiments>3</experiments>
</comment>
<comment type="interaction">
    <interactant intactId="EBI-724303">
        <id>P01040</id>
    </interactant>
    <interactant intactId="EBI-5235340">
        <id>Q7Z699</id>
        <label>SPRED1</label>
    </interactant>
    <organismsDiffer>false</organismsDiffer>
    <experiments>3</experiments>
</comment>
<comment type="interaction">
    <interactant intactId="EBI-724303">
        <id>P01040</id>
    </interactant>
    <interactant intactId="EBI-720609">
        <id>O76024</id>
        <label>WFS1</label>
    </interactant>
    <organismsDiffer>false</organismsDiffer>
    <experiments>3</experiments>
</comment>
<comment type="interaction">
    <interactant intactId="EBI-724303">
        <id>P01040</id>
    </interactant>
    <interactant intactId="EBI-8501709">
        <id>P00784</id>
    </interactant>
    <organismsDiffer>true</organismsDiffer>
    <experiments>2</experiments>
</comment>
<comment type="subcellular location">
    <subcellularLocation>
        <location evidence="2">Cytoplasm</location>
    </subcellularLocation>
</comment>
<comment type="tissue specificity">
    <text evidence="2">Expressed in the skin throughout the epidermis.</text>
</comment>
<comment type="disease" evidence="2">
    <disease id="DI-03298">
        <name>Peeling skin syndrome 4</name>
        <acronym>PSS4</acronym>
        <description>A genodermatosis characterized by congenital exfoliative ichthyosis, sharing some features with ichthyosis bullosa of Siemens and annular epidermolytic ichthyosis. PSS4 presents shortly after birth as dry, scaly skin over most of the body with coarse peeling of non-erythematous skin on the palms and soles, which is exacerbated by excessive moisture and minor trauma. Electron microscopy analysis of skin biopsies, reveals mostly normal-appearing upper layers of the epidermis, but prominent intercellular edema of the basal and suprabasal cell layers with aggregates of tonofilaments in the basal keratinocytes.</description>
        <dbReference type="MIM" id="607936"/>
    </disease>
    <text>The disease is caused by variants affecting the gene represented in this entry.</text>
</comment>
<comment type="similarity">
    <text evidence="4">Belongs to the cystatin family.</text>
</comment>
<comment type="online information" name="Atlas of Genetics and Cytogenetics in Oncology and Haematology">
    <link uri="https://atlasgeneticsoncology.org/gene/40180/CSTA"/>
</comment>
<feature type="chain" id="PRO_0000423202" description="Cystatin-A">
    <location>
        <begin position="1"/>
        <end position="98"/>
    </location>
</feature>
<feature type="initiator methionine" description="Removed; alternate" evidence="3">
    <location>
        <position position="1"/>
    </location>
</feature>
<feature type="chain" id="PRO_0000207128" description="Cystatin-A, N-terminally processed">
    <location>
        <begin position="2"/>
        <end position="98"/>
    </location>
</feature>
<feature type="short sequence motif" description="Secondary area of contact">
    <location>
        <begin position="46"/>
        <end position="50"/>
    </location>
</feature>
<feature type="site" description="Reactive site">
    <location>
        <position position="4"/>
    </location>
</feature>
<feature type="modified residue" description="N-acetylmethionine" evidence="1">
    <location>
        <position position="1"/>
    </location>
</feature>
<feature type="sequence variant" id="VAR_048851" description="In dbSNP:rs34173813.">
    <original>T</original>
    <variation>M</variation>
    <location>
        <position position="96"/>
    </location>
</feature>
<feature type="strand" evidence="5">
    <location>
        <begin position="7"/>
        <end position="12"/>
    </location>
</feature>
<feature type="helix" evidence="7">
    <location>
        <begin position="14"/>
        <end position="31"/>
    </location>
</feature>
<feature type="strand" evidence="5">
    <location>
        <begin position="34"/>
        <end position="36"/>
    </location>
</feature>
<feature type="strand" evidence="7">
    <location>
        <begin position="39"/>
        <end position="58"/>
    </location>
</feature>
<feature type="helix" evidence="7">
    <location>
        <begin position="60"/>
        <end position="62"/>
    </location>
</feature>
<feature type="strand" evidence="7">
    <location>
        <begin position="64"/>
        <end position="71"/>
    </location>
</feature>
<feature type="helix" evidence="7">
    <location>
        <begin position="74"/>
        <end position="76"/>
    </location>
</feature>
<feature type="helix" evidence="6">
    <location>
        <begin position="77"/>
        <end position="79"/>
    </location>
</feature>
<feature type="strand" evidence="7">
    <location>
        <begin position="80"/>
        <end position="89"/>
    </location>
</feature>
<feature type="helix" evidence="8">
    <location>
        <begin position="91"/>
        <end position="93"/>
    </location>
</feature>
<evidence type="ECO:0000250" key="1">
    <source>
        <dbReference type="UniProtKB" id="P01039"/>
    </source>
</evidence>
<evidence type="ECO:0000269" key="2">
    <source>
    </source>
</evidence>
<evidence type="ECO:0000269" key="3">
    <source ref="10"/>
</evidence>
<evidence type="ECO:0000305" key="4"/>
<evidence type="ECO:0007829" key="5">
    <source>
        <dbReference type="PDB" id="1CYU"/>
    </source>
</evidence>
<evidence type="ECO:0007829" key="6">
    <source>
        <dbReference type="PDB" id="1N9J"/>
    </source>
</evidence>
<evidence type="ECO:0007829" key="7">
    <source>
        <dbReference type="PDB" id="3KSE"/>
    </source>
</evidence>
<evidence type="ECO:0007829" key="8">
    <source>
        <dbReference type="PDB" id="8GT0"/>
    </source>
</evidence>
<organism>
    <name type="scientific">Homo sapiens</name>
    <name type="common">Human</name>
    <dbReference type="NCBI Taxonomy" id="9606"/>
    <lineage>
        <taxon>Eukaryota</taxon>
        <taxon>Metazoa</taxon>
        <taxon>Chordata</taxon>
        <taxon>Craniata</taxon>
        <taxon>Vertebrata</taxon>
        <taxon>Euteleostomi</taxon>
        <taxon>Mammalia</taxon>
        <taxon>Eutheria</taxon>
        <taxon>Euarchontoglires</taxon>
        <taxon>Primates</taxon>
        <taxon>Haplorrhini</taxon>
        <taxon>Catarrhini</taxon>
        <taxon>Hominidae</taxon>
        <taxon>Homo</taxon>
    </lineage>
</organism>
<reference key="1">
    <citation type="journal article" date="1983" name="Hoppe-Seyler's Z. Physiol. Chem.">
        <title>Protein inhibitors of cysteine proteinases. II. Primary structure of stefin, a cytosolic protein inhibitor of cysteine proteinases from human polymorphonuclear granulocytes.</title>
        <authorList>
            <person name="Machleidt W."/>
            <person name="Borchart U."/>
            <person name="Fritz H."/>
            <person name="Brzin J."/>
            <person name="Ritonja A."/>
            <person name="Turk V."/>
        </authorList>
    </citation>
    <scope>PROTEIN SEQUENCE</scope>
</reference>
<reference key="2">
    <citation type="journal article" date="1989" name="J. Biochem.">
        <title>Comparative studies on the primary structure of human cystatin as from epidermis, liver, spleen, and leukocytes.</title>
        <authorList>
            <person name="Takeda A."/>
            <person name="Kaji H."/>
            <person name="Nakaya K."/>
            <person name="Nakmura Y."/>
            <person name="Samejima T."/>
        </authorList>
    </citation>
    <scope>PROTEIN SEQUENCE</scope>
</reference>
<reference key="3">
    <citation type="journal article" date="1987" name="Nucleic Acids Res.">
        <title>Effects of UV, 4-NQO and TPA on gene expression in cultured human epidermal keratinocytes.</title>
        <authorList>
            <person name="Kartasova T."/>
            <person name="Cornelissen B.J.C."/>
            <person name="Belt P."/>
            <person name="van de Putte P."/>
        </authorList>
    </citation>
    <scope>NUCLEOTIDE SEQUENCE [MRNA]</scope>
</reference>
<reference key="4">
    <citation type="journal article" date="1997" name="DNA Seq.">
        <title>Genomic structure of human cystatin A.</title>
        <authorList>
            <person name="Yamazaki M."/>
            <person name="Ishidoh K."/>
            <person name="Eiki K."/>
            <person name="Ogawa H."/>
        </authorList>
    </citation>
    <scope>NUCLEOTIDE SEQUENCE [GENOMIC DNA]</scope>
</reference>
<reference key="5">
    <citation type="journal article" date="1998" name="J. Biol. Chem.">
        <title>Structure and transcriptional regulation of the human cystatin A gene. The 12-o-tetradecanoylphorbol-13-acetate (tpa) responsive element-2 site (-272 to -278) on cystatin a gene is critical for tpa-dependent regulation.</title>
        <authorList>
            <person name="Takahashi H."/>
            <person name="Asano K."/>
            <person name="Kinouchi M."/>
            <person name="Ishida-Yamamoto A."/>
            <person name="Wuepper K.D."/>
            <person name="Iizuka H."/>
        </authorList>
    </citation>
    <scope>NUCLEOTIDE SEQUENCE [GENOMIC DNA]</scope>
</reference>
<reference key="6">
    <citation type="journal article" date="2004" name="Nat. Genet.">
        <title>Complete sequencing and characterization of 21,243 full-length human cDNAs.</title>
        <authorList>
            <person name="Ota T."/>
            <person name="Suzuki Y."/>
            <person name="Nishikawa T."/>
            <person name="Otsuki T."/>
            <person name="Sugiyama T."/>
            <person name="Irie R."/>
            <person name="Wakamatsu A."/>
            <person name="Hayashi K."/>
            <person name="Sato H."/>
            <person name="Nagai K."/>
            <person name="Kimura K."/>
            <person name="Makita H."/>
            <person name="Sekine M."/>
            <person name="Obayashi M."/>
            <person name="Nishi T."/>
            <person name="Shibahara T."/>
            <person name="Tanaka T."/>
            <person name="Ishii S."/>
            <person name="Yamamoto J."/>
            <person name="Saito K."/>
            <person name="Kawai Y."/>
            <person name="Isono Y."/>
            <person name="Nakamura Y."/>
            <person name="Nagahari K."/>
            <person name="Murakami K."/>
            <person name="Yasuda T."/>
            <person name="Iwayanagi T."/>
            <person name="Wagatsuma M."/>
            <person name="Shiratori A."/>
            <person name="Sudo H."/>
            <person name="Hosoiri T."/>
            <person name="Kaku Y."/>
            <person name="Kodaira H."/>
            <person name="Kondo H."/>
            <person name="Sugawara M."/>
            <person name="Takahashi M."/>
            <person name="Kanda K."/>
            <person name="Yokoi T."/>
            <person name="Furuya T."/>
            <person name="Kikkawa E."/>
            <person name="Omura Y."/>
            <person name="Abe K."/>
            <person name="Kamihara K."/>
            <person name="Katsuta N."/>
            <person name="Sato K."/>
            <person name="Tanikawa M."/>
            <person name="Yamazaki M."/>
            <person name="Ninomiya K."/>
            <person name="Ishibashi T."/>
            <person name="Yamashita H."/>
            <person name="Murakawa K."/>
            <person name="Fujimori K."/>
            <person name="Tanai H."/>
            <person name="Kimata M."/>
            <person name="Watanabe M."/>
            <person name="Hiraoka S."/>
            <person name="Chiba Y."/>
            <person name="Ishida S."/>
            <person name="Ono Y."/>
            <person name="Takiguchi S."/>
            <person name="Watanabe S."/>
            <person name="Yosida M."/>
            <person name="Hotuta T."/>
            <person name="Kusano J."/>
            <person name="Kanehori K."/>
            <person name="Takahashi-Fujii A."/>
            <person name="Hara H."/>
            <person name="Tanase T.-O."/>
            <person name="Nomura Y."/>
            <person name="Togiya S."/>
            <person name="Komai F."/>
            <person name="Hara R."/>
            <person name="Takeuchi K."/>
            <person name="Arita M."/>
            <person name="Imose N."/>
            <person name="Musashino K."/>
            <person name="Yuuki H."/>
            <person name="Oshima A."/>
            <person name="Sasaki N."/>
            <person name="Aotsuka S."/>
            <person name="Yoshikawa Y."/>
            <person name="Matsunawa H."/>
            <person name="Ichihara T."/>
            <person name="Shiohata N."/>
            <person name="Sano S."/>
            <person name="Moriya S."/>
            <person name="Momiyama H."/>
            <person name="Satoh N."/>
            <person name="Takami S."/>
            <person name="Terashima Y."/>
            <person name="Suzuki O."/>
            <person name="Nakagawa S."/>
            <person name="Senoh A."/>
            <person name="Mizoguchi H."/>
            <person name="Goto Y."/>
            <person name="Shimizu F."/>
            <person name="Wakebe H."/>
            <person name="Hishigaki H."/>
            <person name="Watanabe T."/>
            <person name="Sugiyama A."/>
            <person name="Takemoto M."/>
            <person name="Kawakami B."/>
            <person name="Yamazaki M."/>
            <person name="Watanabe K."/>
            <person name="Kumagai A."/>
            <person name="Itakura S."/>
            <person name="Fukuzumi Y."/>
            <person name="Fujimori Y."/>
            <person name="Komiyama M."/>
            <person name="Tashiro H."/>
            <person name="Tanigami A."/>
            <person name="Fujiwara T."/>
            <person name="Ono T."/>
            <person name="Yamada K."/>
            <person name="Fujii Y."/>
            <person name="Ozaki K."/>
            <person name="Hirao M."/>
            <person name="Ohmori Y."/>
            <person name="Kawabata A."/>
            <person name="Hikiji T."/>
            <person name="Kobatake N."/>
            <person name="Inagaki H."/>
            <person name="Ikema Y."/>
            <person name="Okamoto S."/>
            <person name="Okitani R."/>
            <person name="Kawakami T."/>
            <person name="Noguchi S."/>
            <person name="Itoh T."/>
            <person name="Shigeta K."/>
            <person name="Senba T."/>
            <person name="Matsumura K."/>
            <person name="Nakajima Y."/>
            <person name="Mizuno T."/>
            <person name="Morinaga M."/>
            <person name="Sasaki M."/>
            <person name="Togashi T."/>
            <person name="Oyama M."/>
            <person name="Hata H."/>
            <person name="Watanabe M."/>
            <person name="Komatsu T."/>
            <person name="Mizushima-Sugano J."/>
            <person name="Satoh T."/>
            <person name="Shirai Y."/>
            <person name="Takahashi Y."/>
            <person name="Nakagawa K."/>
            <person name="Okumura K."/>
            <person name="Nagase T."/>
            <person name="Nomura N."/>
            <person name="Kikuchi H."/>
            <person name="Masuho Y."/>
            <person name="Yamashita R."/>
            <person name="Nakai K."/>
            <person name="Yada T."/>
            <person name="Nakamura Y."/>
            <person name="Ohara O."/>
            <person name="Isogai T."/>
            <person name="Sugano S."/>
        </authorList>
    </citation>
    <scope>NUCLEOTIDE SEQUENCE [LARGE SCALE MRNA]</scope>
    <source>
        <tissue>Tongue</tissue>
    </source>
</reference>
<reference key="7">
    <citation type="submission" date="2004-06" db="EMBL/GenBank/DDBJ databases">
        <title>Cloning of human full open reading frames in Gateway(TM) system entry vector (pDONR201).</title>
        <authorList>
            <person name="Ebert L."/>
            <person name="Schick M."/>
            <person name="Neubert P."/>
            <person name="Schatten R."/>
            <person name="Henze S."/>
            <person name="Korn B."/>
        </authorList>
    </citation>
    <scope>NUCLEOTIDE SEQUENCE [LARGE SCALE MRNA]</scope>
</reference>
<reference key="8">
    <citation type="submission" date="2005-09" db="EMBL/GenBank/DDBJ databases">
        <authorList>
            <person name="Mural R.J."/>
            <person name="Istrail S."/>
            <person name="Sutton G."/>
            <person name="Florea L."/>
            <person name="Halpern A.L."/>
            <person name="Mobarry C.M."/>
            <person name="Lippert R."/>
            <person name="Walenz B."/>
            <person name="Shatkay H."/>
            <person name="Dew I."/>
            <person name="Miller J.R."/>
            <person name="Flanigan M.J."/>
            <person name="Edwards N.J."/>
            <person name="Bolanos R."/>
            <person name="Fasulo D."/>
            <person name="Halldorsson B.V."/>
            <person name="Hannenhalli S."/>
            <person name="Turner R."/>
            <person name="Yooseph S."/>
            <person name="Lu F."/>
            <person name="Nusskern D.R."/>
            <person name="Shue B.C."/>
            <person name="Zheng X.H."/>
            <person name="Zhong F."/>
            <person name="Delcher A.L."/>
            <person name="Huson D.H."/>
            <person name="Kravitz S.A."/>
            <person name="Mouchard L."/>
            <person name="Reinert K."/>
            <person name="Remington K.A."/>
            <person name="Clark A.G."/>
            <person name="Waterman M.S."/>
            <person name="Eichler E.E."/>
            <person name="Adams M.D."/>
            <person name="Hunkapiller M.W."/>
            <person name="Myers E.W."/>
            <person name="Venter J.C."/>
        </authorList>
    </citation>
    <scope>NUCLEOTIDE SEQUENCE [LARGE SCALE GENOMIC DNA]</scope>
</reference>
<reference key="9">
    <citation type="journal article" date="2004" name="Genome Res.">
        <title>The status, quality, and expansion of the NIH full-length cDNA project: the Mammalian Gene Collection (MGC).</title>
        <authorList>
            <consortium name="The MGC Project Team"/>
        </authorList>
    </citation>
    <scope>NUCLEOTIDE SEQUENCE [LARGE SCALE MRNA]</scope>
    <source>
        <tissue>Bone marrow</tissue>
    </source>
</reference>
<reference key="10">
    <citation type="submission" date="2009-06" db="UniProtKB">
        <authorList>
            <person name="Bienvenut W.V."/>
            <person name="Gao M."/>
            <person name="Leug H."/>
        </authorList>
    </citation>
    <scope>PROTEIN SEQUENCE OF 2-22; 31-56 AND 72-98</scope>
    <scope>CLEAVAGE OF INITIATOR METHIONINE</scope>
    <scope>IDENTIFICATION BY MASS SPECTROMETRY</scope>
    <source>
        <tissue>Prostatic carcinoma</tissue>
    </source>
</reference>
<reference key="11">
    <citation type="journal article" date="1991" name="J. Invest. Dermatol.">
        <title>Molecular cloning, occurrence, and expression of a novel partially secreted protein 'psoriasin' that is highly up-regulated in psoriatic skin.</title>
        <authorList>
            <person name="Madsen P."/>
            <person name="Rasmussen H.H."/>
            <person name="Leffers H."/>
            <person name="Honore B."/>
            <person name="Dejgaard K."/>
            <person name="Olsen E."/>
            <person name="Kiil J."/>
            <person name="Walbum E."/>
            <person name="Andersen A.H."/>
            <person name="Basse B."/>
            <person name="Lauridsen J.B."/>
            <person name="Ratz G.P."/>
            <person name="Celis A."/>
            <person name="Vandekerckhove J."/>
            <person name="Celis J.E."/>
        </authorList>
    </citation>
    <scope>PROTEIN SEQUENCE OF 72-85</scope>
    <source>
        <tissue>Keratinocyte</tissue>
    </source>
</reference>
<reference key="12">
    <citation type="journal article" date="1992" name="Electrophoresis">
        <title>Microsequences of 145 proteins recorded in the two-dimensional gel protein database of normal human epidermal keratinocytes.</title>
        <authorList>
            <person name="Rasmussen H.H."/>
            <person name="van Damme J."/>
            <person name="Puype M."/>
            <person name="Gesser B."/>
            <person name="Celis J.E."/>
            <person name="Vandekerckhove J."/>
        </authorList>
    </citation>
    <scope>PROTEIN SEQUENCE OF 72-85</scope>
    <source>
        <tissue>Keratinocyte</tissue>
    </source>
</reference>
<reference key="13">
    <citation type="journal article" date="2011" name="Am. J. Hum. Genet.">
        <title>Mutations in CSTA, encoding Cystatin A, underlie exfoliative ichthyosis and reveal a role for this protease inhibitor in cell-cell adhesion.</title>
        <authorList>
            <person name="Blaydon D.C."/>
            <person name="Nitoiu D."/>
            <person name="Eckl K.M."/>
            <person name="Cabral R.M."/>
            <person name="Bland P."/>
            <person name="Hausser I."/>
            <person name="van Heel D.A."/>
            <person name="Rajpopat S."/>
            <person name="Fischer J."/>
            <person name="Oji V."/>
            <person name="Zvulunov A."/>
            <person name="Traupe H."/>
            <person name="Hennies H.C."/>
            <person name="Kelsell D.P."/>
        </authorList>
    </citation>
    <scope>FUNCTION</scope>
    <scope>TISSUE SPECIFICITY</scope>
    <scope>SUBCELLULAR LOCATION</scope>
    <scope>INVOLVEMENT IN PSS4</scope>
</reference>
<reference key="14">
    <citation type="journal article" date="2011" name="BMC Syst. Biol.">
        <title>Initial characterization of the human central proteome.</title>
        <authorList>
            <person name="Burkard T.R."/>
            <person name="Planyavsky M."/>
            <person name="Kaupe I."/>
            <person name="Breitwieser F.P."/>
            <person name="Buerckstuemmer T."/>
            <person name="Bennett K.L."/>
            <person name="Superti-Furga G."/>
            <person name="Colinge J."/>
        </authorList>
    </citation>
    <scope>IDENTIFICATION BY MASS SPECTROMETRY [LARGE SCALE ANALYSIS]</scope>
</reference>
<reference key="15">
    <citation type="journal article" date="2014" name="J. Proteomics">
        <title>An enzyme assisted RP-RPLC approach for in-depth analysis of human liver phosphoproteome.</title>
        <authorList>
            <person name="Bian Y."/>
            <person name="Song C."/>
            <person name="Cheng K."/>
            <person name="Dong M."/>
            <person name="Wang F."/>
            <person name="Huang J."/>
            <person name="Sun D."/>
            <person name="Wang L."/>
            <person name="Ye M."/>
            <person name="Zou H."/>
        </authorList>
    </citation>
    <scope>IDENTIFICATION BY MASS SPECTROMETRY [LARGE SCALE ANALYSIS]</scope>
    <source>
        <tissue>Liver</tissue>
    </source>
</reference>
<reference key="16">
    <citation type="journal article" date="1995" name="J. Mol. Biol.">
        <title>The three-dimensional solution structure of human stefin A.</title>
        <authorList>
            <person name="Martin J.R."/>
            <person name="Craven C.J."/>
            <person name="Jerala R."/>
            <person name="Kroon-Zitko L."/>
            <person name="Zerovnik E."/>
            <person name="Turk V."/>
            <person name="Waltho J.P."/>
        </authorList>
    </citation>
    <scope>STRUCTURE BY NMR</scope>
</reference>
<reference key="17">
    <citation type="journal article" date="1995" name="Biochemistry">
        <title>Solution structure of a human cystatin A variant, cystatin A2-98 M65L, by NMR spectroscopy. A possible role of the interactions between the N- and C-termini to maintain the inhibitory active form of cystatin A.</title>
        <authorList>
            <person name="Tate S."/>
            <person name="Ushioda T."/>
            <person name="Utsunomiya-Tate N."/>
            <person name="Shibuya K."/>
            <person name="Ohyama Y."/>
            <person name="Nakano Y."/>
            <person name="Kaji H."/>
            <person name="Inagaki F."/>
            <person name="Samejima T."/>
            <person name="Kainosho M."/>
        </authorList>
    </citation>
    <scope>STRUCTURE BY NMR</scope>
</reference>
<proteinExistence type="evidence at protein level"/>
<gene>
    <name type="primary">CSTA</name>
    <name type="synonym">STF1</name>
    <name type="synonym">STFA</name>
</gene>
<keyword id="KW-0002">3D-structure</keyword>
<keyword id="KW-0007">Acetylation</keyword>
<keyword id="KW-0130">Cell adhesion</keyword>
<keyword id="KW-0963">Cytoplasm</keyword>
<keyword id="KW-0903">Direct protein sequencing</keyword>
<keyword id="KW-0977">Ichthyosis</keyword>
<keyword id="KW-0646">Protease inhibitor</keyword>
<keyword id="KW-1267">Proteomics identification</keyword>
<keyword id="KW-1185">Reference proteome</keyword>
<keyword id="KW-0789">Thiol protease inhibitor</keyword>
<name>CYTA_HUMAN</name>
<accession>P01040</accession>
<accession>Q6IB90</accession>
<sequence length="98" mass="11006">MIPGGLSEAKPATPEIQEIVDKVKPQLEEKTNETYGKLEAVQYKTQVVAGTNYYIKVRAGDNKYMHLKVFKSLPGQNEDLVLTGYQVDKNKDDELTGF</sequence>
<dbReference type="EMBL" id="X05978">
    <property type="protein sequence ID" value="CAA29398.1"/>
    <property type="molecule type" value="mRNA"/>
</dbReference>
<dbReference type="EMBL" id="D88422">
    <property type="protein sequence ID" value="BAA13609.1"/>
    <property type="molecule type" value="Genomic_DNA"/>
</dbReference>
<dbReference type="EMBL" id="AB007774">
    <property type="protein sequence ID" value="BAA87858.1"/>
    <property type="molecule type" value="Genomic_DNA"/>
</dbReference>
<dbReference type="EMBL" id="AK291308">
    <property type="protein sequence ID" value="BAF83997.1"/>
    <property type="molecule type" value="mRNA"/>
</dbReference>
<dbReference type="EMBL" id="CR456914">
    <property type="protein sequence ID" value="CAG33195.1"/>
    <property type="molecule type" value="mRNA"/>
</dbReference>
<dbReference type="EMBL" id="CH471052">
    <property type="protein sequence ID" value="EAW79489.1"/>
    <property type="molecule type" value="Genomic_DNA"/>
</dbReference>
<dbReference type="EMBL" id="BC010379">
    <property type="protein sequence ID" value="AAH10379.1"/>
    <property type="molecule type" value="mRNA"/>
</dbReference>
<dbReference type="CCDS" id="CCDS3011.1"/>
<dbReference type="PIR" id="A29139">
    <property type="entry name" value="UDHUS"/>
</dbReference>
<dbReference type="RefSeq" id="NP_005204.1">
    <property type="nucleotide sequence ID" value="NM_005213.4"/>
</dbReference>
<dbReference type="PDB" id="1CYU">
    <property type="method" value="NMR"/>
    <property type="chains" value="A=1-98"/>
</dbReference>
<dbReference type="PDB" id="1CYV">
    <property type="method" value="NMR"/>
    <property type="chains" value="A=1-98"/>
</dbReference>
<dbReference type="PDB" id="1DVC">
    <property type="method" value="NMR"/>
    <property type="chains" value="A=1-98"/>
</dbReference>
<dbReference type="PDB" id="1DVD">
    <property type="method" value="NMR"/>
    <property type="chains" value="A=1-98"/>
</dbReference>
<dbReference type="PDB" id="1GD3">
    <property type="method" value="NMR"/>
    <property type="chains" value="A=1-98"/>
</dbReference>
<dbReference type="PDB" id="1GD4">
    <property type="method" value="NMR"/>
    <property type="chains" value="A=1-98"/>
</dbReference>
<dbReference type="PDB" id="1N9J">
    <property type="method" value="NMR"/>
    <property type="chains" value="A/B=1-98"/>
</dbReference>
<dbReference type="PDB" id="1NB3">
    <property type="method" value="X-ray"/>
    <property type="resolution" value="2.80 A"/>
    <property type="chains" value="I/J/K/L=1-98"/>
</dbReference>
<dbReference type="PDB" id="1NB5">
    <property type="method" value="X-ray"/>
    <property type="resolution" value="2.40 A"/>
    <property type="chains" value="I/J/K/L=1-98"/>
</dbReference>
<dbReference type="PDB" id="3K9M">
    <property type="method" value="X-ray"/>
    <property type="resolution" value="2.61 A"/>
    <property type="chains" value="C/D=1-98"/>
</dbReference>
<dbReference type="PDB" id="3KFQ">
    <property type="method" value="X-ray"/>
    <property type="resolution" value="1.99 A"/>
    <property type="chains" value="C/D=1-98"/>
</dbReference>
<dbReference type="PDB" id="3KSE">
    <property type="method" value="X-ray"/>
    <property type="resolution" value="1.71 A"/>
    <property type="chains" value="D/E/F=1-98"/>
</dbReference>
<dbReference type="PDB" id="8GT0">
    <property type="method" value="X-ray"/>
    <property type="resolution" value="3.28 A"/>
    <property type="chains" value="B/D=1-98"/>
</dbReference>
<dbReference type="PDB" id="8GT7">
    <property type="method" value="X-ray"/>
    <property type="resolution" value="3.28 A"/>
    <property type="chains" value="B/D=1-98"/>
</dbReference>
<dbReference type="PDBsum" id="1CYU"/>
<dbReference type="PDBsum" id="1CYV"/>
<dbReference type="PDBsum" id="1DVC"/>
<dbReference type="PDBsum" id="1DVD"/>
<dbReference type="PDBsum" id="1GD3"/>
<dbReference type="PDBsum" id="1GD4"/>
<dbReference type="PDBsum" id="1N9J"/>
<dbReference type="PDBsum" id="1NB3"/>
<dbReference type="PDBsum" id="1NB5"/>
<dbReference type="PDBsum" id="3K9M"/>
<dbReference type="PDBsum" id="3KFQ"/>
<dbReference type="PDBsum" id="3KSE"/>
<dbReference type="PDBsum" id="8GT0"/>
<dbReference type="PDBsum" id="8GT7"/>
<dbReference type="BMRB" id="P01040"/>
<dbReference type="SMR" id="P01040"/>
<dbReference type="BioGRID" id="107857">
    <property type="interactions" value="152"/>
</dbReference>
<dbReference type="ComplexPortal" id="CPX-98">
    <property type="entry name" value="Cathepsin-B - cystatin-A complex"/>
</dbReference>
<dbReference type="FunCoup" id="P01040">
    <property type="interactions" value="410"/>
</dbReference>
<dbReference type="IntAct" id="P01040">
    <property type="interactions" value="78"/>
</dbReference>
<dbReference type="MINT" id="P01040"/>
<dbReference type="STRING" id="9606.ENSP00000264474"/>
<dbReference type="MEROPS" id="I25.001"/>
<dbReference type="GlyGen" id="P01040">
    <property type="glycosylation" value="1 site, 1 O-linked glycan (1 site)"/>
</dbReference>
<dbReference type="iPTMnet" id="P01040"/>
<dbReference type="PhosphoSitePlus" id="P01040"/>
<dbReference type="SwissPalm" id="P01040"/>
<dbReference type="BioMuta" id="CSTA"/>
<dbReference type="DMDM" id="118177"/>
<dbReference type="jPOST" id="P01040"/>
<dbReference type="MassIVE" id="P01040"/>
<dbReference type="PaxDb" id="9606-ENSP00000264474"/>
<dbReference type="PeptideAtlas" id="P01040"/>
<dbReference type="PRIDE" id="P01040"/>
<dbReference type="ProteomicsDB" id="51314"/>
<dbReference type="TopDownProteomics" id="P01040"/>
<dbReference type="Antibodypedia" id="608">
    <property type="antibodies" value="559 antibodies from 39 providers"/>
</dbReference>
<dbReference type="CPTC" id="P01040">
    <property type="antibodies" value="3 antibodies"/>
</dbReference>
<dbReference type="DNASU" id="1475"/>
<dbReference type="Ensembl" id="ENST00000264474.4">
    <property type="protein sequence ID" value="ENSP00000264474.3"/>
    <property type="gene ID" value="ENSG00000121552.4"/>
</dbReference>
<dbReference type="GeneID" id="1475"/>
<dbReference type="KEGG" id="hsa:1475"/>
<dbReference type="MANE-Select" id="ENST00000264474.4">
    <property type="protein sequence ID" value="ENSP00000264474.3"/>
    <property type="RefSeq nucleotide sequence ID" value="NM_005213.4"/>
    <property type="RefSeq protein sequence ID" value="NP_005204.1"/>
</dbReference>
<dbReference type="UCSC" id="uc003eex.4">
    <property type="organism name" value="human"/>
</dbReference>
<dbReference type="AGR" id="HGNC:2481"/>
<dbReference type="CTD" id="1475"/>
<dbReference type="DisGeNET" id="1475"/>
<dbReference type="GeneCards" id="CSTA"/>
<dbReference type="HGNC" id="HGNC:2481">
    <property type="gene designation" value="CSTA"/>
</dbReference>
<dbReference type="HPA" id="ENSG00000121552">
    <property type="expression patterns" value="Tissue enhanced (esophagus, vagina)"/>
</dbReference>
<dbReference type="MalaCards" id="CSTA"/>
<dbReference type="MIM" id="184600">
    <property type="type" value="gene"/>
</dbReference>
<dbReference type="MIM" id="607936">
    <property type="type" value="phenotype"/>
</dbReference>
<dbReference type="neXtProt" id="NX_P01040"/>
<dbReference type="OpenTargets" id="ENSG00000121552"/>
<dbReference type="Orphanet" id="263534">
    <property type="disease" value="Acral peeling skin syndrome"/>
</dbReference>
<dbReference type="Orphanet" id="289586">
    <property type="disease" value="Exfoliative ichthyosis"/>
</dbReference>
<dbReference type="PharmGKB" id="PA26983"/>
<dbReference type="VEuPathDB" id="HostDB:ENSG00000121552"/>
<dbReference type="eggNOG" id="ENOG502SF2X">
    <property type="taxonomic scope" value="Eukaryota"/>
</dbReference>
<dbReference type="GeneTree" id="ENSGT00940000155717"/>
<dbReference type="HOGENOM" id="CLU_150234_2_1_1"/>
<dbReference type="InParanoid" id="P01040"/>
<dbReference type="OMA" id="DNRYMHL"/>
<dbReference type="OrthoDB" id="2429551at2759"/>
<dbReference type="PAN-GO" id="P01040">
    <property type="GO annotations" value="2 GO annotations based on evolutionary models"/>
</dbReference>
<dbReference type="PhylomeDB" id="P01040"/>
<dbReference type="TreeFam" id="TF333174"/>
<dbReference type="PathwayCommons" id="P01040"/>
<dbReference type="Reactome" id="R-HSA-6809371">
    <property type="pathway name" value="Formation of the cornified envelope"/>
</dbReference>
<dbReference type="SignaLink" id="P01040"/>
<dbReference type="BioGRID-ORCS" id="1475">
    <property type="hits" value="51 hits in 1085 CRISPR screens"/>
</dbReference>
<dbReference type="ChiTaRS" id="CSTA">
    <property type="organism name" value="human"/>
</dbReference>
<dbReference type="EvolutionaryTrace" id="P01040"/>
<dbReference type="GeneWiki" id="Cystatin_A"/>
<dbReference type="GenomeRNAi" id="1475"/>
<dbReference type="Pharos" id="P01040">
    <property type="development level" value="Tbio"/>
</dbReference>
<dbReference type="PRO" id="PR:P01040"/>
<dbReference type="Proteomes" id="UP000005640">
    <property type="component" value="Chromosome 3"/>
</dbReference>
<dbReference type="RNAct" id="P01040">
    <property type="molecule type" value="protein"/>
</dbReference>
<dbReference type="Bgee" id="ENSG00000121552">
    <property type="expression patterns" value="Expressed in pharyngeal mucosa and 166 other cell types or tissues"/>
</dbReference>
<dbReference type="ExpressionAtlas" id="P01040">
    <property type="expression patterns" value="baseline and differential"/>
</dbReference>
<dbReference type="GO" id="GO:0001533">
    <property type="term" value="C:cornified envelope"/>
    <property type="evidence" value="ECO:0000314"/>
    <property type="project" value="UniProtKB"/>
</dbReference>
<dbReference type="GO" id="GO:0005737">
    <property type="term" value="C:cytoplasm"/>
    <property type="evidence" value="ECO:0000314"/>
    <property type="project" value="UniProtKB"/>
</dbReference>
<dbReference type="GO" id="GO:0005829">
    <property type="term" value="C:cytosol"/>
    <property type="evidence" value="ECO:0000314"/>
    <property type="project" value="HPA"/>
</dbReference>
<dbReference type="GO" id="GO:0005615">
    <property type="term" value="C:extracellular space"/>
    <property type="evidence" value="ECO:0000314"/>
    <property type="project" value="UniProtKB"/>
</dbReference>
<dbReference type="GO" id="GO:0005654">
    <property type="term" value="C:nucleoplasm"/>
    <property type="evidence" value="ECO:0000314"/>
    <property type="project" value="HPA"/>
</dbReference>
<dbReference type="GO" id="GO:1904090">
    <property type="term" value="C:peptidase inhibitor complex"/>
    <property type="evidence" value="ECO:0000353"/>
    <property type="project" value="ComplexPortal"/>
</dbReference>
<dbReference type="GO" id="GO:0004869">
    <property type="term" value="F:cysteine-type endopeptidase inhibitor activity"/>
    <property type="evidence" value="ECO:0000314"/>
    <property type="project" value="UniProtKB"/>
</dbReference>
<dbReference type="GO" id="GO:0002020">
    <property type="term" value="F:protease binding"/>
    <property type="evidence" value="ECO:0000353"/>
    <property type="project" value="BHF-UCL"/>
</dbReference>
<dbReference type="GO" id="GO:0098609">
    <property type="term" value="P:cell-cell adhesion"/>
    <property type="evidence" value="ECO:0000315"/>
    <property type="project" value="UniProtKB"/>
</dbReference>
<dbReference type="GO" id="GO:0030216">
    <property type="term" value="P:keratinocyte differentiation"/>
    <property type="evidence" value="ECO:0000314"/>
    <property type="project" value="UniProtKB"/>
</dbReference>
<dbReference type="GO" id="GO:0045861">
    <property type="term" value="P:negative regulation of proteolysis"/>
    <property type="evidence" value="ECO:0000314"/>
    <property type="project" value="UniProtKB"/>
</dbReference>
<dbReference type="GO" id="GO:0018149">
    <property type="term" value="P:peptide cross-linking"/>
    <property type="evidence" value="ECO:0000314"/>
    <property type="project" value="UniProtKB"/>
</dbReference>
<dbReference type="CDD" id="cd00042">
    <property type="entry name" value="CY"/>
    <property type="match status" value="1"/>
</dbReference>
<dbReference type="FunFam" id="3.10.450.10:FF:000001">
    <property type="entry name" value="Cystatin-A"/>
    <property type="match status" value="1"/>
</dbReference>
<dbReference type="Gene3D" id="3.10.450.10">
    <property type="match status" value="1"/>
</dbReference>
<dbReference type="InterPro" id="IPR000010">
    <property type="entry name" value="Cystatin_dom"/>
</dbReference>
<dbReference type="InterPro" id="IPR046350">
    <property type="entry name" value="Cystatin_sf"/>
</dbReference>
<dbReference type="InterPro" id="IPR018073">
    <property type="entry name" value="Prot_inh_cystat_CS"/>
</dbReference>
<dbReference type="InterPro" id="IPR001713">
    <property type="entry name" value="Prot_inh_stefin"/>
</dbReference>
<dbReference type="PANTHER" id="PTHR11414">
    <property type="entry name" value="CYSTATIN FAMILY MEMBER"/>
    <property type="match status" value="1"/>
</dbReference>
<dbReference type="PANTHER" id="PTHR11414:SF20">
    <property type="entry name" value="CYSTATIN-A"/>
    <property type="match status" value="1"/>
</dbReference>
<dbReference type="Pfam" id="PF00031">
    <property type="entry name" value="Cystatin"/>
    <property type="match status" value="1"/>
</dbReference>
<dbReference type="PRINTS" id="PR00295">
    <property type="entry name" value="STEFINA"/>
</dbReference>
<dbReference type="SMART" id="SM00043">
    <property type="entry name" value="CY"/>
    <property type="match status" value="1"/>
</dbReference>
<dbReference type="SUPFAM" id="SSF54403">
    <property type="entry name" value="Cystatin/monellin"/>
    <property type="match status" value="1"/>
</dbReference>
<dbReference type="PROSITE" id="PS00287">
    <property type="entry name" value="CYSTATIN"/>
    <property type="match status" value="1"/>
</dbReference>
<protein>
    <recommendedName>
        <fullName>Cystatin-A</fullName>
    </recommendedName>
    <alternativeName>
        <fullName>Cystatin-AS</fullName>
    </alternativeName>
    <alternativeName>
        <fullName>Stefin-A</fullName>
    </alternativeName>
    <component>
        <recommendedName>
            <fullName>Cystatin-A, N-terminally processed</fullName>
        </recommendedName>
    </component>
</protein>